<gene>
    <name evidence="1" type="primary">panB</name>
    <name type="ordered locus">PP_4699</name>
</gene>
<accession>Q88DW9</accession>
<feature type="chain" id="PRO_0000184877" description="3-methyl-2-oxobutanoate hydroxymethyltransferase">
    <location>
        <begin position="1"/>
        <end position="266"/>
    </location>
</feature>
<feature type="active site" description="Proton acceptor" evidence="1">
    <location>
        <position position="181"/>
    </location>
</feature>
<feature type="binding site" evidence="1">
    <location>
        <begin position="45"/>
        <end position="46"/>
    </location>
    <ligand>
        <name>3-methyl-2-oxobutanoate</name>
        <dbReference type="ChEBI" id="CHEBI:11851"/>
    </ligand>
</feature>
<feature type="binding site" evidence="1">
    <location>
        <position position="45"/>
    </location>
    <ligand>
        <name>Mg(2+)</name>
        <dbReference type="ChEBI" id="CHEBI:18420"/>
    </ligand>
</feature>
<feature type="binding site" evidence="1">
    <location>
        <position position="84"/>
    </location>
    <ligand>
        <name>3-methyl-2-oxobutanoate</name>
        <dbReference type="ChEBI" id="CHEBI:11851"/>
    </ligand>
</feature>
<feature type="binding site" evidence="1">
    <location>
        <position position="84"/>
    </location>
    <ligand>
        <name>Mg(2+)</name>
        <dbReference type="ChEBI" id="CHEBI:18420"/>
    </ligand>
</feature>
<feature type="binding site" evidence="1">
    <location>
        <position position="112"/>
    </location>
    <ligand>
        <name>3-methyl-2-oxobutanoate</name>
        <dbReference type="ChEBI" id="CHEBI:11851"/>
    </ligand>
</feature>
<feature type="binding site" evidence="1">
    <location>
        <position position="114"/>
    </location>
    <ligand>
        <name>Mg(2+)</name>
        <dbReference type="ChEBI" id="CHEBI:18420"/>
    </ligand>
</feature>
<reference key="1">
    <citation type="journal article" date="2002" name="Environ. Microbiol.">
        <title>Complete genome sequence and comparative analysis of the metabolically versatile Pseudomonas putida KT2440.</title>
        <authorList>
            <person name="Nelson K.E."/>
            <person name="Weinel C."/>
            <person name="Paulsen I.T."/>
            <person name="Dodson R.J."/>
            <person name="Hilbert H."/>
            <person name="Martins dos Santos V.A.P."/>
            <person name="Fouts D.E."/>
            <person name="Gill S.R."/>
            <person name="Pop M."/>
            <person name="Holmes M."/>
            <person name="Brinkac L.M."/>
            <person name="Beanan M.J."/>
            <person name="DeBoy R.T."/>
            <person name="Daugherty S.C."/>
            <person name="Kolonay J.F."/>
            <person name="Madupu R."/>
            <person name="Nelson W.C."/>
            <person name="White O."/>
            <person name="Peterson J.D."/>
            <person name="Khouri H.M."/>
            <person name="Hance I."/>
            <person name="Chris Lee P."/>
            <person name="Holtzapple E.K."/>
            <person name="Scanlan D."/>
            <person name="Tran K."/>
            <person name="Moazzez A."/>
            <person name="Utterback T.R."/>
            <person name="Rizzo M."/>
            <person name="Lee K."/>
            <person name="Kosack D."/>
            <person name="Moestl D."/>
            <person name="Wedler H."/>
            <person name="Lauber J."/>
            <person name="Stjepandic D."/>
            <person name="Hoheisel J."/>
            <person name="Straetz M."/>
            <person name="Heim S."/>
            <person name="Kiewitz C."/>
            <person name="Eisen J.A."/>
            <person name="Timmis K.N."/>
            <person name="Duesterhoeft A."/>
            <person name="Tuemmler B."/>
            <person name="Fraser C.M."/>
        </authorList>
    </citation>
    <scope>NUCLEOTIDE SEQUENCE [LARGE SCALE GENOMIC DNA]</scope>
    <source>
        <strain>ATCC 47054 / DSM 6125 / CFBP 8728 / NCIMB 11950 / KT2440</strain>
    </source>
</reference>
<protein>
    <recommendedName>
        <fullName evidence="1">3-methyl-2-oxobutanoate hydroxymethyltransferase</fullName>
        <ecNumber evidence="1">2.1.2.11</ecNumber>
    </recommendedName>
    <alternativeName>
        <fullName evidence="1">Ketopantoate hydroxymethyltransferase</fullName>
        <shortName evidence="1">KPHMT</shortName>
    </alternativeName>
</protein>
<comment type="function">
    <text evidence="1">Catalyzes the reversible reaction in which hydroxymethyl group from 5,10-methylenetetrahydrofolate is transferred onto alpha-ketoisovalerate to form ketopantoate.</text>
</comment>
<comment type="catalytic activity">
    <reaction evidence="1">
        <text>3-methyl-2-oxobutanoate + (6R)-5,10-methylene-5,6,7,8-tetrahydrofolate + H2O = 2-dehydropantoate + (6S)-5,6,7,8-tetrahydrofolate</text>
        <dbReference type="Rhea" id="RHEA:11824"/>
        <dbReference type="ChEBI" id="CHEBI:11561"/>
        <dbReference type="ChEBI" id="CHEBI:11851"/>
        <dbReference type="ChEBI" id="CHEBI:15377"/>
        <dbReference type="ChEBI" id="CHEBI:15636"/>
        <dbReference type="ChEBI" id="CHEBI:57453"/>
        <dbReference type="EC" id="2.1.2.11"/>
    </reaction>
</comment>
<comment type="cofactor">
    <cofactor evidence="1">
        <name>Mg(2+)</name>
        <dbReference type="ChEBI" id="CHEBI:18420"/>
    </cofactor>
    <text evidence="1">Binds 1 Mg(2+) ion per subunit.</text>
</comment>
<comment type="pathway">
    <text evidence="1">Cofactor biosynthesis; (R)-pantothenate biosynthesis; (R)-pantoate from 3-methyl-2-oxobutanoate: step 1/2.</text>
</comment>
<comment type="subunit">
    <text evidence="1">Homodecamer; pentamer of dimers.</text>
</comment>
<comment type="subcellular location">
    <subcellularLocation>
        <location evidence="1">Cytoplasm</location>
    </subcellularLocation>
</comment>
<comment type="similarity">
    <text evidence="1">Belongs to the PanB family.</text>
</comment>
<name>PANB_PSEPK</name>
<sequence>MPEVTLTTLNGLKAKGEKITMLTCYDATFAKAASQAGVEVLLVGDSLGMVLQGHDSTLPVTTAEMAYHTASVKRGNDGALILTDLPFMAHATPEQAFANSATLMQAGAHMVKIEGAAWLAETIRLLAERGVPVCAHMGLTPQTVNVLGGYKVQGRQEAQARQMRADAIALEQAGAAMLLLECVPSELAAEITNAVGIPVIGIGAGSATDGQVLVLHDMLGLSLSGRVPKFVKNFMQGQPDIHSALVAYVEAVKQVSFPGSEHGFSA</sequence>
<dbReference type="EC" id="2.1.2.11" evidence="1"/>
<dbReference type="EMBL" id="AE015451">
    <property type="protein sequence ID" value="AAN70272.1"/>
    <property type="molecule type" value="Genomic_DNA"/>
</dbReference>
<dbReference type="RefSeq" id="NP_746808.1">
    <property type="nucleotide sequence ID" value="NC_002947.4"/>
</dbReference>
<dbReference type="RefSeq" id="WP_003249992.1">
    <property type="nucleotide sequence ID" value="NZ_CP169744.1"/>
</dbReference>
<dbReference type="SMR" id="Q88DW9"/>
<dbReference type="STRING" id="160488.PP_4699"/>
<dbReference type="PaxDb" id="160488-PP_4699"/>
<dbReference type="GeneID" id="83682413"/>
<dbReference type="KEGG" id="ppu:PP_4699"/>
<dbReference type="PATRIC" id="fig|160488.4.peg.5009"/>
<dbReference type="eggNOG" id="COG0413">
    <property type="taxonomic scope" value="Bacteria"/>
</dbReference>
<dbReference type="HOGENOM" id="CLU_036645_1_0_6"/>
<dbReference type="OrthoDB" id="9781789at2"/>
<dbReference type="PhylomeDB" id="Q88DW9"/>
<dbReference type="BioCyc" id="PPUT160488:G1G01-5020-MONOMER"/>
<dbReference type="UniPathway" id="UPA00028">
    <property type="reaction ID" value="UER00003"/>
</dbReference>
<dbReference type="Proteomes" id="UP000000556">
    <property type="component" value="Chromosome"/>
</dbReference>
<dbReference type="GO" id="GO:0005737">
    <property type="term" value="C:cytoplasm"/>
    <property type="evidence" value="ECO:0007669"/>
    <property type="project" value="UniProtKB-SubCell"/>
</dbReference>
<dbReference type="GO" id="GO:0003864">
    <property type="term" value="F:3-methyl-2-oxobutanoate hydroxymethyltransferase activity"/>
    <property type="evidence" value="ECO:0007669"/>
    <property type="project" value="UniProtKB-UniRule"/>
</dbReference>
<dbReference type="GO" id="GO:0000287">
    <property type="term" value="F:magnesium ion binding"/>
    <property type="evidence" value="ECO:0007669"/>
    <property type="project" value="TreeGrafter"/>
</dbReference>
<dbReference type="GO" id="GO:0015940">
    <property type="term" value="P:pantothenate biosynthetic process"/>
    <property type="evidence" value="ECO:0007669"/>
    <property type="project" value="UniProtKB-UniRule"/>
</dbReference>
<dbReference type="CDD" id="cd06557">
    <property type="entry name" value="KPHMT-like"/>
    <property type="match status" value="1"/>
</dbReference>
<dbReference type="FunFam" id="3.20.20.60:FF:000003">
    <property type="entry name" value="3-methyl-2-oxobutanoate hydroxymethyltransferase"/>
    <property type="match status" value="1"/>
</dbReference>
<dbReference type="Gene3D" id="3.20.20.60">
    <property type="entry name" value="Phosphoenolpyruvate-binding domains"/>
    <property type="match status" value="1"/>
</dbReference>
<dbReference type="HAMAP" id="MF_00156">
    <property type="entry name" value="PanB"/>
    <property type="match status" value="1"/>
</dbReference>
<dbReference type="InterPro" id="IPR003700">
    <property type="entry name" value="Pantoate_hydroxy_MeTrfase"/>
</dbReference>
<dbReference type="InterPro" id="IPR015813">
    <property type="entry name" value="Pyrv/PenolPyrv_kinase-like_dom"/>
</dbReference>
<dbReference type="InterPro" id="IPR040442">
    <property type="entry name" value="Pyrv_kinase-like_dom_sf"/>
</dbReference>
<dbReference type="NCBIfam" id="TIGR00222">
    <property type="entry name" value="panB"/>
    <property type="match status" value="1"/>
</dbReference>
<dbReference type="NCBIfam" id="NF001452">
    <property type="entry name" value="PRK00311.1"/>
    <property type="match status" value="1"/>
</dbReference>
<dbReference type="PANTHER" id="PTHR20881">
    <property type="entry name" value="3-METHYL-2-OXOBUTANOATE HYDROXYMETHYLTRANSFERASE"/>
    <property type="match status" value="1"/>
</dbReference>
<dbReference type="PANTHER" id="PTHR20881:SF0">
    <property type="entry name" value="3-METHYL-2-OXOBUTANOATE HYDROXYMETHYLTRANSFERASE"/>
    <property type="match status" value="1"/>
</dbReference>
<dbReference type="Pfam" id="PF02548">
    <property type="entry name" value="Pantoate_transf"/>
    <property type="match status" value="1"/>
</dbReference>
<dbReference type="PIRSF" id="PIRSF000388">
    <property type="entry name" value="Pantoate_hydroxy_MeTrfase"/>
    <property type="match status" value="1"/>
</dbReference>
<dbReference type="SUPFAM" id="SSF51621">
    <property type="entry name" value="Phosphoenolpyruvate/pyruvate domain"/>
    <property type="match status" value="1"/>
</dbReference>
<proteinExistence type="inferred from homology"/>
<evidence type="ECO:0000255" key="1">
    <source>
        <dbReference type="HAMAP-Rule" id="MF_00156"/>
    </source>
</evidence>
<organism>
    <name type="scientific">Pseudomonas putida (strain ATCC 47054 / DSM 6125 / CFBP 8728 / NCIMB 11950 / KT2440)</name>
    <dbReference type="NCBI Taxonomy" id="160488"/>
    <lineage>
        <taxon>Bacteria</taxon>
        <taxon>Pseudomonadati</taxon>
        <taxon>Pseudomonadota</taxon>
        <taxon>Gammaproteobacteria</taxon>
        <taxon>Pseudomonadales</taxon>
        <taxon>Pseudomonadaceae</taxon>
        <taxon>Pseudomonas</taxon>
    </lineage>
</organism>
<keyword id="KW-0963">Cytoplasm</keyword>
<keyword id="KW-0460">Magnesium</keyword>
<keyword id="KW-0479">Metal-binding</keyword>
<keyword id="KW-0566">Pantothenate biosynthesis</keyword>
<keyword id="KW-1185">Reference proteome</keyword>
<keyword id="KW-0808">Transferase</keyword>